<dbReference type="EMBL" id="CP000970">
    <property type="protein sequence ID" value="ACB19705.1"/>
    <property type="molecule type" value="Genomic_DNA"/>
</dbReference>
<dbReference type="RefSeq" id="WP_001153615.1">
    <property type="nucleotide sequence ID" value="NC_010498.1"/>
</dbReference>
<dbReference type="SMR" id="B1LHE8"/>
<dbReference type="KEGG" id="ecm:EcSMS35_3629"/>
<dbReference type="HOGENOM" id="CLU_180796_4_2_6"/>
<dbReference type="Proteomes" id="UP000007011">
    <property type="component" value="Chromosome"/>
</dbReference>
<dbReference type="Gene3D" id="1.20.5.300">
    <property type="match status" value="1"/>
</dbReference>
<dbReference type="HAMAP" id="MF_00715">
    <property type="entry name" value="SlyX"/>
    <property type="match status" value="1"/>
</dbReference>
<dbReference type="InterPro" id="IPR007236">
    <property type="entry name" value="SlyX"/>
</dbReference>
<dbReference type="NCBIfam" id="NF002750">
    <property type="entry name" value="PRK02793.1"/>
    <property type="match status" value="1"/>
</dbReference>
<dbReference type="PANTHER" id="PTHR36508">
    <property type="entry name" value="PROTEIN SLYX"/>
    <property type="match status" value="1"/>
</dbReference>
<dbReference type="PANTHER" id="PTHR36508:SF1">
    <property type="entry name" value="PROTEIN SLYX"/>
    <property type="match status" value="1"/>
</dbReference>
<dbReference type="Pfam" id="PF04102">
    <property type="entry name" value="SlyX"/>
    <property type="match status" value="1"/>
</dbReference>
<evidence type="ECO:0000255" key="1">
    <source>
        <dbReference type="HAMAP-Rule" id="MF_00715"/>
    </source>
</evidence>
<evidence type="ECO:0000256" key="2">
    <source>
        <dbReference type="SAM" id="MobiDB-lite"/>
    </source>
</evidence>
<proteinExistence type="inferred from homology"/>
<sequence>MQDLSLEARLAELESRLAFQEITIEELNVTVTAHEMEMAKLRDHLRLLTEKLKASQPSNIASQAEETPPPHY</sequence>
<gene>
    <name evidence="1" type="primary">slyX</name>
    <name type="ordered locus">EcSMS35_3629</name>
</gene>
<feature type="chain" id="PRO_1000195834" description="Protein SlyX">
    <location>
        <begin position="1"/>
        <end position="72"/>
    </location>
</feature>
<feature type="region of interest" description="Disordered" evidence="2">
    <location>
        <begin position="52"/>
        <end position="72"/>
    </location>
</feature>
<feature type="compositionally biased region" description="Polar residues" evidence="2">
    <location>
        <begin position="55"/>
        <end position="65"/>
    </location>
</feature>
<accession>B1LHE8</accession>
<reference key="1">
    <citation type="journal article" date="2008" name="J. Bacteriol.">
        <title>Insights into the environmental resistance gene pool from the genome sequence of the multidrug-resistant environmental isolate Escherichia coli SMS-3-5.</title>
        <authorList>
            <person name="Fricke W.F."/>
            <person name="Wright M.S."/>
            <person name="Lindell A.H."/>
            <person name="Harkins D.M."/>
            <person name="Baker-Austin C."/>
            <person name="Ravel J."/>
            <person name="Stepanauskas R."/>
        </authorList>
    </citation>
    <scope>NUCLEOTIDE SEQUENCE [LARGE SCALE GENOMIC DNA]</scope>
    <source>
        <strain>SMS-3-5 / SECEC</strain>
    </source>
</reference>
<comment type="similarity">
    <text evidence="1">Belongs to the SlyX family.</text>
</comment>
<protein>
    <recommendedName>
        <fullName evidence="1">Protein SlyX</fullName>
    </recommendedName>
</protein>
<name>SLYX_ECOSM</name>
<organism>
    <name type="scientific">Escherichia coli (strain SMS-3-5 / SECEC)</name>
    <dbReference type="NCBI Taxonomy" id="439855"/>
    <lineage>
        <taxon>Bacteria</taxon>
        <taxon>Pseudomonadati</taxon>
        <taxon>Pseudomonadota</taxon>
        <taxon>Gammaproteobacteria</taxon>
        <taxon>Enterobacterales</taxon>
        <taxon>Enterobacteriaceae</taxon>
        <taxon>Escherichia</taxon>
    </lineage>
</organism>